<keyword id="KW-0963">Cytoplasm</keyword>
<keyword id="KW-0312">Gluconeogenesis</keyword>
<keyword id="KW-0456">Lyase</keyword>
<keyword id="KW-0663">Pyridoxal phosphate</keyword>
<organism>
    <name type="scientific">Saccharomyces cerevisiae (strain RM11-1a)</name>
    <name type="common">Baker's yeast</name>
    <dbReference type="NCBI Taxonomy" id="285006"/>
    <lineage>
        <taxon>Eukaryota</taxon>
        <taxon>Fungi</taxon>
        <taxon>Dikarya</taxon>
        <taxon>Ascomycota</taxon>
        <taxon>Saccharomycotina</taxon>
        <taxon>Saccharomycetes</taxon>
        <taxon>Saccharomycetales</taxon>
        <taxon>Saccharomycetaceae</taxon>
        <taxon>Saccharomyces</taxon>
    </lineage>
</organism>
<dbReference type="EC" id="4.3.1.17"/>
<dbReference type="EMBL" id="CH408055">
    <property type="protein sequence ID" value="EDV09644.1"/>
    <property type="molecule type" value="Genomic_DNA"/>
</dbReference>
<dbReference type="SMR" id="B3LU13"/>
<dbReference type="HOGENOM" id="CLU_021152_3_1_1"/>
<dbReference type="OrthoDB" id="34905at4893"/>
<dbReference type="UniPathway" id="UPA00138"/>
<dbReference type="Proteomes" id="UP000008335">
    <property type="component" value="Unassembled WGS sequence"/>
</dbReference>
<dbReference type="GO" id="GO:0005737">
    <property type="term" value="C:cytoplasm"/>
    <property type="evidence" value="ECO:0007669"/>
    <property type="project" value="UniProtKB-SubCell"/>
</dbReference>
<dbReference type="GO" id="GO:0003941">
    <property type="term" value="F:L-serine ammonia-lyase activity"/>
    <property type="evidence" value="ECO:0007669"/>
    <property type="project" value="UniProtKB-EC"/>
</dbReference>
<dbReference type="GO" id="GO:0030170">
    <property type="term" value="F:pyridoxal phosphate binding"/>
    <property type="evidence" value="ECO:0007669"/>
    <property type="project" value="InterPro"/>
</dbReference>
<dbReference type="GO" id="GO:0004794">
    <property type="term" value="F:threonine deaminase activity"/>
    <property type="evidence" value="ECO:0007669"/>
    <property type="project" value="UniProtKB-ARBA"/>
</dbReference>
<dbReference type="GO" id="GO:0006094">
    <property type="term" value="P:gluconeogenesis"/>
    <property type="evidence" value="ECO:0007669"/>
    <property type="project" value="UniProtKB-UniPathway"/>
</dbReference>
<dbReference type="GO" id="GO:0009097">
    <property type="term" value="P:isoleucine biosynthetic process"/>
    <property type="evidence" value="ECO:0007669"/>
    <property type="project" value="TreeGrafter"/>
</dbReference>
<dbReference type="GO" id="GO:0006565">
    <property type="term" value="P:L-serine catabolic process"/>
    <property type="evidence" value="ECO:0007669"/>
    <property type="project" value="TreeGrafter"/>
</dbReference>
<dbReference type="GO" id="GO:0006567">
    <property type="term" value="P:threonine catabolic process"/>
    <property type="evidence" value="ECO:0007669"/>
    <property type="project" value="TreeGrafter"/>
</dbReference>
<dbReference type="CDD" id="cd06448">
    <property type="entry name" value="L-Ser-dehyd"/>
    <property type="match status" value="1"/>
</dbReference>
<dbReference type="FunFam" id="3.40.50.1100:FF:000068">
    <property type="entry name" value="Catabolic L-serine/threonine dehydratase"/>
    <property type="match status" value="1"/>
</dbReference>
<dbReference type="FunFam" id="3.40.50.1100:FF:000040">
    <property type="entry name" value="L-serine dehydratase, putative"/>
    <property type="match status" value="1"/>
</dbReference>
<dbReference type="Gene3D" id="3.40.50.1100">
    <property type="match status" value="2"/>
</dbReference>
<dbReference type="InterPro" id="IPR050147">
    <property type="entry name" value="Ser/Thr_Dehydratase"/>
</dbReference>
<dbReference type="InterPro" id="IPR000634">
    <property type="entry name" value="Ser/Thr_deHydtase_PyrdxlP-BS"/>
</dbReference>
<dbReference type="InterPro" id="IPR001926">
    <property type="entry name" value="TrpB-like_PALP"/>
</dbReference>
<dbReference type="InterPro" id="IPR036052">
    <property type="entry name" value="TrpB-like_PALP_sf"/>
</dbReference>
<dbReference type="PANTHER" id="PTHR48078:SF2">
    <property type="entry name" value="CATABOLIC L-SERINE_THREONINE DEHYDRATASE"/>
    <property type="match status" value="1"/>
</dbReference>
<dbReference type="PANTHER" id="PTHR48078">
    <property type="entry name" value="THREONINE DEHYDRATASE, MITOCHONDRIAL-RELATED"/>
    <property type="match status" value="1"/>
</dbReference>
<dbReference type="Pfam" id="PF00291">
    <property type="entry name" value="PALP"/>
    <property type="match status" value="1"/>
</dbReference>
<dbReference type="SUPFAM" id="SSF53686">
    <property type="entry name" value="Tryptophan synthase beta subunit-like PLP-dependent enzymes"/>
    <property type="match status" value="1"/>
</dbReference>
<dbReference type="PROSITE" id="PS00165">
    <property type="entry name" value="DEHYDRATASE_SER_THR"/>
    <property type="match status" value="1"/>
</dbReference>
<accession>B3LU13</accession>
<feature type="chain" id="PRO_0000393395" description="L-serine dehydratase">
    <location>
        <begin position="1"/>
        <end position="338"/>
    </location>
</feature>
<feature type="modified residue" description="N6-(pyridoxal phosphate)lysine" evidence="1">
    <location>
        <position position="39"/>
    </location>
</feature>
<gene>
    <name type="primary">SDL1</name>
    <name type="synonym">SDH1</name>
    <name type="ORF">SCRG_05338</name>
</gene>
<proteinExistence type="inferred from homology"/>
<name>SDHL_YEAS1</name>
<evidence type="ECO:0000250" key="1"/>
<evidence type="ECO:0000305" key="2"/>
<comment type="catalytic activity">
    <reaction>
        <text>L-serine = pyruvate + NH4(+)</text>
        <dbReference type="Rhea" id="RHEA:19169"/>
        <dbReference type="ChEBI" id="CHEBI:15361"/>
        <dbReference type="ChEBI" id="CHEBI:28938"/>
        <dbReference type="ChEBI" id="CHEBI:33384"/>
        <dbReference type="EC" id="4.3.1.17"/>
    </reaction>
</comment>
<comment type="cofactor">
    <cofactor evidence="1">
        <name>pyridoxal 5'-phosphate</name>
        <dbReference type="ChEBI" id="CHEBI:597326"/>
    </cofactor>
</comment>
<comment type="pathway">
    <text>Carbohydrate biosynthesis; gluconeogenesis.</text>
</comment>
<comment type="subcellular location">
    <subcellularLocation>
        <location evidence="1">Cytoplasm</location>
    </subcellularLocation>
</comment>
<comment type="similarity">
    <text evidence="2">Belongs to the serine/threonine dehydratase family.</text>
</comment>
<reference key="1">
    <citation type="submission" date="2005-03" db="EMBL/GenBank/DDBJ databases">
        <title>Annotation of the Saccharomyces cerevisiae RM11-1a genome.</title>
        <authorList>
            <consortium name="The Broad Institute Genome Sequencing Platform"/>
            <person name="Birren B.W."/>
            <person name="Lander E.S."/>
            <person name="Galagan J.E."/>
            <person name="Nusbaum C."/>
            <person name="Devon K."/>
            <person name="Cuomo C."/>
            <person name="Jaffe D.B."/>
            <person name="Butler J."/>
            <person name="Alvarez P."/>
            <person name="Gnerre S."/>
            <person name="Grabherr M."/>
            <person name="Kleber M."/>
            <person name="Mauceli E.W."/>
            <person name="Brockman W."/>
            <person name="MacCallum I.A."/>
            <person name="Rounsley S."/>
            <person name="Young S.K."/>
            <person name="LaButti K."/>
            <person name="Pushparaj V."/>
            <person name="DeCaprio D."/>
            <person name="Crawford M."/>
            <person name="Koehrsen M."/>
            <person name="Engels R."/>
            <person name="Montgomery P."/>
            <person name="Pearson M."/>
            <person name="Howarth C."/>
            <person name="Larson L."/>
            <person name="Luoma S."/>
            <person name="White J."/>
            <person name="O'Leary S."/>
            <person name="Kodira C.D."/>
            <person name="Zeng Q."/>
            <person name="Yandava C."/>
            <person name="Alvarado L."/>
            <person name="Pratt S."/>
            <person name="Kruglyak L."/>
        </authorList>
    </citation>
    <scope>NUCLEOTIDE SEQUENCE [LARGE SCALE GENOMIC DNA]</scope>
    <source>
        <strain>RM11-1a</strain>
    </source>
</reference>
<sequence length="338" mass="36800">MEMTHYEKTPLIRQVFNNGKTNSWFYVKHEILQPGGSFKSRGIGHLIRKSNEEALSEGSGKLAVFSSSGGNAGLAAATACRSMALNCSVVVPKTTKPRMVKKIQSAGAKVIIHGDHWGEADEYLRHKLMAQESQHGSKTLYVHPFDNETIWEGHSTIVDEIIEQLKENDISLPRVKALVCSVGGGGLFSGIIKGLDRNHLAEKIPVVAVETAGCDVLNKSLKKGSPVTLEKLTSVATSLASPYIASFAFESFNKYGCKSVVLSDQDVLATCLRYADDYNFIVEPACGASLHLCYHPEILEDILEQKIYEDDIVIIIACGGSCMTYEDLVKASSTLNVS</sequence>
<protein>
    <recommendedName>
        <fullName>L-serine dehydratase</fullName>
        <ecNumber>4.3.1.17</ecNumber>
    </recommendedName>
    <alternativeName>
        <fullName>L-serine deaminase</fullName>
    </alternativeName>
</protein>